<organism>
    <name type="scientific">Christiangramia forsetii (strain DSM 17595 / CGMCC 1.15422 / KT0803)</name>
    <name type="common">Gramella forsetii</name>
    <dbReference type="NCBI Taxonomy" id="411154"/>
    <lineage>
        <taxon>Bacteria</taxon>
        <taxon>Pseudomonadati</taxon>
        <taxon>Bacteroidota</taxon>
        <taxon>Flavobacteriia</taxon>
        <taxon>Flavobacteriales</taxon>
        <taxon>Flavobacteriaceae</taxon>
        <taxon>Christiangramia</taxon>
    </lineage>
</organism>
<proteinExistence type="inferred from homology"/>
<sequence length="691" mass="78120">MNKNPQRFTITAALPYTNGPIHIGHLAGVYVPADIYSRFLRMQGYDVAFVCGSDEHGVPITIKAKKEGVTPQDVVDKYNGIIKKSFEDFGITFDNYSRTSGKTHHDTASAFFKKMYEDGKFIEESTEQLYDEEAGQFLADRFVTGTCPKCGNEEAYGDQCESCGTSLNATDLINPKSAITGAVPTLKETRHWFLPLDQYEDFLKEWILKGHKSDWKSNVYGQVKSWIDDGLRARAVTRDLDWGIPVPVEGGDGKVLYVWFDAPIGYISSTKEWAEREGKDWEPYWKDENTKLVHFIGKDNIVFHCIIFPVMLKAHGDYILPENVPANEFLNLEGKKLSTSKNWAVWLHEYLEEFPDQQDVLRYVLTANAPETKDNDFTWKDFQARNNNELVAIFGNFINRVVVLTNKYYNGIVPEPGAYSEIDEKTIAELKAYPSVIASSIERYRFREAQGELMNLARLGNKYLADEEPWKLIKTDEERVKTIMYVALQIASALSIISEPFLPFTSAKLKKMLNHVDESSDNTPDWDIIGTKEALILGGHQIGKAELLFSKIEDEQMEKQLEKLEATKTANAMEDQKAEPQKEIATFEDFTKMDLRVGTIIEAQKMPKTKKLMVLKVDTGIDQRTVVSGIAEHFKAEDIIGKKVTVLANLAPRKLRGVDSEGMILMTENAEGKLVFVNPDEDGVKAGTTIN</sequence>
<accession>A0M5Z9</accession>
<name>SYM_CHRFK</name>
<evidence type="ECO:0000255" key="1">
    <source>
        <dbReference type="HAMAP-Rule" id="MF_00098"/>
    </source>
</evidence>
<feature type="chain" id="PRO_0000331831" description="Methionine--tRNA ligase">
    <location>
        <begin position="1"/>
        <end position="691"/>
    </location>
</feature>
<feature type="domain" description="tRNA-binding" evidence="1">
    <location>
        <begin position="589"/>
        <end position="691"/>
    </location>
</feature>
<feature type="short sequence motif" description="'HIGH' region">
    <location>
        <begin position="15"/>
        <end position="25"/>
    </location>
</feature>
<feature type="short sequence motif" description="'KMSKS' region">
    <location>
        <begin position="336"/>
        <end position="340"/>
    </location>
</feature>
<feature type="binding site" evidence="1">
    <location>
        <position position="147"/>
    </location>
    <ligand>
        <name>Zn(2+)</name>
        <dbReference type="ChEBI" id="CHEBI:29105"/>
    </ligand>
</feature>
<feature type="binding site" evidence="1">
    <location>
        <position position="150"/>
    </location>
    <ligand>
        <name>Zn(2+)</name>
        <dbReference type="ChEBI" id="CHEBI:29105"/>
    </ligand>
</feature>
<feature type="binding site" evidence="1">
    <location>
        <position position="160"/>
    </location>
    <ligand>
        <name>Zn(2+)</name>
        <dbReference type="ChEBI" id="CHEBI:29105"/>
    </ligand>
</feature>
<feature type="binding site" evidence="1">
    <location>
        <position position="163"/>
    </location>
    <ligand>
        <name>Zn(2+)</name>
        <dbReference type="ChEBI" id="CHEBI:29105"/>
    </ligand>
</feature>
<feature type="binding site" evidence="1">
    <location>
        <position position="339"/>
    </location>
    <ligand>
        <name>ATP</name>
        <dbReference type="ChEBI" id="CHEBI:30616"/>
    </ligand>
</feature>
<comment type="function">
    <text evidence="1">Is required not only for elongation of protein synthesis but also for the initiation of all mRNA translation through initiator tRNA(fMet) aminoacylation.</text>
</comment>
<comment type="catalytic activity">
    <reaction evidence="1">
        <text>tRNA(Met) + L-methionine + ATP = L-methionyl-tRNA(Met) + AMP + diphosphate</text>
        <dbReference type="Rhea" id="RHEA:13481"/>
        <dbReference type="Rhea" id="RHEA-COMP:9667"/>
        <dbReference type="Rhea" id="RHEA-COMP:9698"/>
        <dbReference type="ChEBI" id="CHEBI:30616"/>
        <dbReference type="ChEBI" id="CHEBI:33019"/>
        <dbReference type="ChEBI" id="CHEBI:57844"/>
        <dbReference type="ChEBI" id="CHEBI:78442"/>
        <dbReference type="ChEBI" id="CHEBI:78530"/>
        <dbReference type="ChEBI" id="CHEBI:456215"/>
        <dbReference type="EC" id="6.1.1.10"/>
    </reaction>
</comment>
<comment type="cofactor">
    <cofactor evidence="1">
        <name>Zn(2+)</name>
        <dbReference type="ChEBI" id="CHEBI:29105"/>
    </cofactor>
    <text evidence="1">Binds 1 zinc ion per subunit.</text>
</comment>
<comment type="subunit">
    <text evidence="1">Homodimer.</text>
</comment>
<comment type="subcellular location">
    <subcellularLocation>
        <location evidence="1">Cytoplasm</location>
    </subcellularLocation>
</comment>
<comment type="similarity">
    <text evidence="1">Belongs to the class-I aminoacyl-tRNA synthetase family. MetG type 1 subfamily.</text>
</comment>
<dbReference type="EC" id="6.1.1.10" evidence="1"/>
<dbReference type="EMBL" id="CU207366">
    <property type="protein sequence ID" value="CAL68044.1"/>
    <property type="molecule type" value="Genomic_DNA"/>
</dbReference>
<dbReference type="RefSeq" id="WP_011710945.1">
    <property type="nucleotide sequence ID" value="NC_008571.1"/>
</dbReference>
<dbReference type="SMR" id="A0M5Z9"/>
<dbReference type="STRING" id="411154.GFO_3100"/>
<dbReference type="KEGG" id="gfo:GFO_3100"/>
<dbReference type="eggNOG" id="COG0073">
    <property type="taxonomic scope" value="Bacteria"/>
</dbReference>
<dbReference type="eggNOG" id="COG0143">
    <property type="taxonomic scope" value="Bacteria"/>
</dbReference>
<dbReference type="HOGENOM" id="CLU_009710_1_2_10"/>
<dbReference type="OrthoDB" id="9810191at2"/>
<dbReference type="Proteomes" id="UP000000755">
    <property type="component" value="Chromosome"/>
</dbReference>
<dbReference type="GO" id="GO:0005829">
    <property type="term" value="C:cytosol"/>
    <property type="evidence" value="ECO:0007669"/>
    <property type="project" value="TreeGrafter"/>
</dbReference>
<dbReference type="GO" id="GO:0005524">
    <property type="term" value="F:ATP binding"/>
    <property type="evidence" value="ECO:0007669"/>
    <property type="project" value="UniProtKB-UniRule"/>
</dbReference>
<dbReference type="GO" id="GO:0046872">
    <property type="term" value="F:metal ion binding"/>
    <property type="evidence" value="ECO:0007669"/>
    <property type="project" value="UniProtKB-KW"/>
</dbReference>
<dbReference type="GO" id="GO:0004825">
    <property type="term" value="F:methionine-tRNA ligase activity"/>
    <property type="evidence" value="ECO:0007669"/>
    <property type="project" value="UniProtKB-UniRule"/>
</dbReference>
<dbReference type="GO" id="GO:0000049">
    <property type="term" value="F:tRNA binding"/>
    <property type="evidence" value="ECO:0007669"/>
    <property type="project" value="UniProtKB-KW"/>
</dbReference>
<dbReference type="GO" id="GO:0006431">
    <property type="term" value="P:methionyl-tRNA aminoacylation"/>
    <property type="evidence" value="ECO:0007669"/>
    <property type="project" value="UniProtKB-UniRule"/>
</dbReference>
<dbReference type="CDD" id="cd07957">
    <property type="entry name" value="Anticodon_Ia_Met"/>
    <property type="match status" value="1"/>
</dbReference>
<dbReference type="CDD" id="cd00814">
    <property type="entry name" value="MetRS_core"/>
    <property type="match status" value="1"/>
</dbReference>
<dbReference type="CDD" id="cd02800">
    <property type="entry name" value="tRNA_bind_EcMetRS_like"/>
    <property type="match status" value="1"/>
</dbReference>
<dbReference type="FunFam" id="2.20.28.20:FF:000001">
    <property type="entry name" value="Methionine--tRNA ligase"/>
    <property type="match status" value="1"/>
</dbReference>
<dbReference type="FunFam" id="2.40.50.140:FF:000042">
    <property type="entry name" value="Methionine--tRNA ligase"/>
    <property type="match status" value="1"/>
</dbReference>
<dbReference type="Gene3D" id="3.40.50.620">
    <property type="entry name" value="HUPs"/>
    <property type="match status" value="1"/>
</dbReference>
<dbReference type="Gene3D" id="1.10.730.10">
    <property type="entry name" value="Isoleucyl-tRNA Synthetase, Domain 1"/>
    <property type="match status" value="1"/>
</dbReference>
<dbReference type="Gene3D" id="2.20.28.20">
    <property type="entry name" value="Methionyl-tRNA synthetase, Zn-domain"/>
    <property type="match status" value="1"/>
</dbReference>
<dbReference type="Gene3D" id="2.40.50.140">
    <property type="entry name" value="Nucleic acid-binding proteins"/>
    <property type="match status" value="1"/>
</dbReference>
<dbReference type="HAMAP" id="MF_00098">
    <property type="entry name" value="Met_tRNA_synth_type1"/>
    <property type="match status" value="1"/>
</dbReference>
<dbReference type="InterPro" id="IPR001412">
    <property type="entry name" value="aa-tRNA-synth_I_CS"/>
</dbReference>
<dbReference type="InterPro" id="IPR041872">
    <property type="entry name" value="Anticodon_Met"/>
</dbReference>
<dbReference type="InterPro" id="IPR004495">
    <property type="entry name" value="Met-tRNA-synth_bsu_C"/>
</dbReference>
<dbReference type="InterPro" id="IPR023458">
    <property type="entry name" value="Met-tRNA_ligase_1"/>
</dbReference>
<dbReference type="InterPro" id="IPR014758">
    <property type="entry name" value="Met-tRNA_synth"/>
</dbReference>
<dbReference type="InterPro" id="IPR015413">
    <property type="entry name" value="Methionyl/Leucyl_tRNA_Synth"/>
</dbReference>
<dbReference type="InterPro" id="IPR033911">
    <property type="entry name" value="MetRS_core"/>
</dbReference>
<dbReference type="InterPro" id="IPR029038">
    <property type="entry name" value="MetRS_Zn"/>
</dbReference>
<dbReference type="InterPro" id="IPR012340">
    <property type="entry name" value="NA-bd_OB-fold"/>
</dbReference>
<dbReference type="InterPro" id="IPR014729">
    <property type="entry name" value="Rossmann-like_a/b/a_fold"/>
</dbReference>
<dbReference type="InterPro" id="IPR002547">
    <property type="entry name" value="tRNA-bd_dom"/>
</dbReference>
<dbReference type="InterPro" id="IPR009080">
    <property type="entry name" value="tRNAsynth_Ia_anticodon-bd"/>
</dbReference>
<dbReference type="NCBIfam" id="TIGR00398">
    <property type="entry name" value="metG"/>
    <property type="match status" value="1"/>
</dbReference>
<dbReference type="NCBIfam" id="TIGR00399">
    <property type="entry name" value="metG_C_term"/>
    <property type="match status" value="1"/>
</dbReference>
<dbReference type="NCBIfam" id="NF001100">
    <property type="entry name" value="PRK00133.1"/>
    <property type="match status" value="1"/>
</dbReference>
<dbReference type="PANTHER" id="PTHR45765">
    <property type="entry name" value="METHIONINE--TRNA LIGASE"/>
    <property type="match status" value="1"/>
</dbReference>
<dbReference type="PANTHER" id="PTHR45765:SF1">
    <property type="entry name" value="METHIONINE--TRNA LIGASE, CYTOPLASMIC"/>
    <property type="match status" value="1"/>
</dbReference>
<dbReference type="Pfam" id="PF19303">
    <property type="entry name" value="Anticodon_3"/>
    <property type="match status" value="1"/>
</dbReference>
<dbReference type="Pfam" id="PF09334">
    <property type="entry name" value="tRNA-synt_1g"/>
    <property type="match status" value="1"/>
</dbReference>
<dbReference type="Pfam" id="PF01588">
    <property type="entry name" value="tRNA_bind"/>
    <property type="match status" value="1"/>
</dbReference>
<dbReference type="PRINTS" id="PR01041">
    <property type="entry name" value="TRNASYNTHMET"/>
</dbReference>
<dbReference type="SUPFAM" id="SSF47323">
    <property type="entry name" value="Anticodon-binding domain of a subclass of class I aminoacyl-tRNA synthetases"/>
    <property type="match status" value="1"/>
</dbReference>
<dbReference type="SUPFAM" id="SSF57770">
    <property type="entry name" value="Methionyl-tRNA synthetase (MetRS), Zn-domain"/>
    <property type="match status" value="1"/>
</dbReference>
<dbReference type="SUPFAM" id="SSF50249">
    <property type="entry name" value="Nucleic acid-binding proteins"/>
    <property type="match status" value="1"/>
</dbReference>
<dbReference type="SUPFAM" id="SSF52374">
    <property type="entry name" value="Nucleotidylyl transferase"/>
    <property type="match status" value="1"/>
</dbReference>
<dbReference type="PROSITE" id="PS00178">
    <property type="entry name" value="AA_TRNA_LIGASE_I"/>
    <property type="match status" value="1"/>
</dbReference>
<dbReference type="PROSITE" id="PS50886">
    <property type="entry name" value="TRBD"/>
    <property type="match status" value="1"/>
</dbReference>
<keyword id="KW-0030">Aminoacyl-tRNA synthetase</keyword>
<keyword id="KW-0067">ATP-binding</keyword>
<keyword id="KW-0963">Cytoplasm</keyword>
<keyword id="KW-0436">Ligase</keyword>
<keyword id="KW-0479">Metal-binding</keyword>
<keyword id="KW-0547">Nucleotide-binding</keyword>
<keyword id="KW-0648">Protein biosynthesis</keyword>
<keyword id="KW-0694">RNA-binding</keyword>
<keyword id="KW-0820">tRNA-binding</keyword>
<keyword id="KW-0862">Zinc</keyword>
<reference key="1">
    <citation type="journal article" date="2006" name="Environ. Microbiol.">
        <title>Whole genome analysis of the marine Bacteroidetes'Gramella forsetii' reveals adaptations to degradation of polymeric organic matter.</title>
        <authorList>
            <person name="Bauer M."/>
            <person name="Kube M."/>
            <person name="Teeling H."/>
            <person name="Richter M."/>
            <person name="Lombardot T."/>
            <person name="Allers E."/>
            <person name="Wuerdemann C.A."/>
            <person name="Quast C."/>
            <person name="Kuhl H."/>
            <person name="Knaust F."/>
            <person name="Woebken D."/>
            <person name="Bischof K."/>
            <person name="Mussmann M."/>
            <person name="Choudhuri J.V."/>
            <person name="Meyer F."/>
            <person name="Reinhardt R."/>
            <person name="Amann R.I."/>
            <person name="Gloeckner F.O."/>
        </authorList>
    </citation>
    <scope>NUCLEOTIDE SEQUENCE [LARGE SCALE GENOMIC DNA]</scope>
    <source>
        <strain>DSM 17595 / CGMCC 1.15422 / KT0803</strain>
    </source>
</reference>
<gene>
    <name evidence="1" type="primary">metG</name>
    <name type="ordered locus">GFO_3100</name>
</gene>
<protein>
    <recommendedName>
        <fullName evidence="1">Methionine--tRNA ligase</fullName>
        <ecNumber evidence="1">6.1.1.10</ecNumber>
    </recommendedName>
    <alternativeName>
        <fullName evidence="1">Methionyl-tRNA synthetase</fullName>
        <shortName evidence="1">MetRS</shortName>
    </alternativeName>
</protein>